<reference key="1">
    <citation type="journal article" date="2015" name="Genome Announc.">
        <title>Draft genome sequence of the cellulolytic fungus Chaetomium globosum.</title>
        <authorList>
            <person name="Cuomo C.A."/>
            <person name="Untereiner W.A."/>
            <person name="Ma L.-J."/>
            <person name="Grabherr M."/>
            <person name="Birren B.W."/>
        </authorList>
    </citation>
    <scope>NUCLEOTIDE SEQUENCE [LARGE SCALE GENOMIC DNA]</scope>
    <source>
        <strain>ATCC 6205 / CBS 148.51 / DSM 1962 / NBRC 6347 / NRRL 1970</strain>
    </source>
</reference>
<evidence type="ECO:0000255" key="1">
    <source>
        <dbReference type="HAMAP-Rule" id="MF_03061"/>
    </source>
</evidence>
<evidence type="ECO:0000305" key="2"/>
<feature type="transit peptide" description="Mitochondrion" evidence="1">
    <location>
        <begin position="1"/>
        <end position="24"/>
    </location>
</feature>
<feature type="chain" id="PRO_0000385567" description="Elongation factor G, mitochondrial">
    <location>
        <begin position="25"/>
        <end position="798"/>
    </location>
</feature>
<feature type="domain" description="tr-type G">
    <location>
        <begin position="97"/>
        <end position="383"/>
    </location>
</feature>
<feature type="binding site" evidence="1">
    <location>
        <begin position="106"/>
        <end position="113"/>
    </location>
    <ligand>
        <name>GTP</name>
        <dbReference type="ChEBI" id="CHEBI:37565"/>
    </ligand>
</feature>
<feature type="binding site" evidence="1">
    <location>
        <begin position="181"/>
        <end position="185"/>
    </location>
    <ligand>
        <name>GTP</name>
        <dbReference type="ChEBI" id="CHEBI:37565"/>
    </ligand>
</feature>
<feature type="binding site" evidence="1">
    <location>
        <begin position="235"/>
        <end position="238"/>
    </location>
    <ligand>
        <name>GTP</name>
        <dbReference type="ChEBI" id="CHEBI:37565"/>
    </ligand>
</feature>
<sequence length="798" mass="88113">MRVIRAAAALNSSCAASSRQGARYASLACRTALTSSPLAPCYSARLSGLRYFTKTHAPRAASAAEAALKQAKELAAANMTPEAAAARMTPEEAKRLSMVRNIGIAAHIDSGKTTVSERILFYTGRTKAIHEVRGRDGVGAKMDSMELERERGITIQSAATFADWKKVENGVEETYHFNLIDTPGHIDFTIEVERAMRVLDGAVMVLCAVSGVQSQTITVDRQMKRYNVPRISFVNKMDRMGSNPFKAVEMINSKLKIPAAAVQIPIGSEKEFEGVVDLIHMRAIRNDGLRGINVRVSNTIPENLKELAEQKRQELIEKLADVDDEIAEMFLEEKTPTPEQIKAAIRRATIGLKFTPVLMGSALADKSVQPMLDAVCDYLPNPGNVDNMALDRSKKEEPVKLLPYDSLPFVGLAFKLEENPYGQLTYIRVYQGTLKKGQYLFNARNDKKVRIPRIVRMHSNEMEDVNEIGAGEICAVFGVECASGDTFTDGRLPYGMSSMFVPDSVMSLSIKPKRSSDADAFSKAMNRFMREDPTFRLHVDEESEETIISGMGELHLDIYVERLRREYKVDCETGKPRVAYRETISKRAEYDFLLKRQSGGPGDYARVVGWIEPNVENAEGNKFETKVVGGNIPDKYLAACGKGFEEACIKGPLLGHKVIGAHMVVTDGATHVTDSSDYAFNLATQMAFRKAFPDAGGAVLEPLMKTTITAPAEFQGNILMLMNKRGSIVDTEVGADEFTMIAECSLNAMFGFSTHLRAATQGKGEFSMEFSHYAPAPPHLQKELVAQYEKELEAKRSK</sequence>
<keyword id="KW-0251">Elongation factor</keyword>
<keyword id="KW-0342">GTP-binding</keyword>
<keyword id="KW-0496">Mitochondrion</keyword>
<keyword id="KW-0547">Nucleotide-binding</keyword>
<keyword id="KW-0648">Protein biosynthesis</keyword>
<keyword id="KW-1185">Reference proteome</keyword>
<keyword id="KW-0809">Transit peptide</keyword>
<organism>
    <name type="scientific">Chaetomium globosum (strain ATCC 6205 / CBS 148.51 / DSM 1962 / NBRC 6347 / NRRL 1970)</name>
    <name type="common">Soil fungus</name>
    <dbReference type="NCBI Taxonomy" id="306901"/>
    <lineage>
        <taxon>Eukaryota</taxon>
        <taxon>Fungi</taxon>
        <taxon>Dikarya</taxon>
        <taxon>Ascomycota</taxon>
        <taxon>Pezizomycotina</taxon>
        <taxon>Sordariomycetes</taxon>
        <taxon>Sordariomycetidae</taxon>
        <taxon>Sordariales</taxon>
        <taxon>Chaetomiaceae</taxon>
        <taxon>Chaetomium</taxon>
    </lineage>
</organism>
<dbReference type="EMBL" id="CH408029">
    <property type="protein sequence ID" value="EAQ93119.1"/>
    <property type="molecule type" value="Genomic_DNA"/>
</dbReference>
<dbReference type="RefSeq" id="XP_001220575.1">
    <property type="nucleotide sequence ID" value="XM_001220574.1"/>
</dbReference>
<dbReference type="SMR" id="Q2HEK0"/>
<dbReference type="FunCoup" id="Q2HEK0">
    <property type="interactions" value="589"/>
</dbReference>
<dbReference type="STRING" id="306901.Q2HEK0"/>
<dbReference type="GeneID" id="4386316"/>
<dbReference type="VEuPathDB" id="FungiDB:CHGG_01354"/>
<dbReference type="eggNOG" id="KOG0465">
    <property type="taxonomic scope" value="Eukaryota"/>
</dbReference>
<dbReference type="HOGENOM" id="CLU_002794_4_1_1"/>
<dbReference type="InParanoid" id="Q2HEK0"/>
<dbReference type="OMA" id="GQFAKVQ"/>
<dbReference type="OrthoDB" id="198619at2759"/>
<dbReference type="UniPathway" id="UPA00345"/>
<dbReference type="Proteomes" id="UP000001056">
    <property type="component" value="Unassembled WGS sequence"/>
</dbReference>
<dbReference type="GO" id="GO:0005739">
    <property type="term" value="C:mitochondrion"/>
    <property type="evidence" value="ECO:0007669"/>
    <property type="project" value="UniProtKB-SubCell"/>
</dbReference>
<dbReference type="GO" id="GO:0005525">
    <property type="term" value="F:GTP binding"/>
    <property type="evidence" value="ECO:0007669"/>
    <property type="project" value="UniProtKB-UniRule"/>
</dbReference>
<dbReference type="GO" id="GO:0003924">
    <property type="term" value="F:GTPase activity"/>
    <property type="evidence" value="ECO:0007669"/>
    <property type="project" value="UniProtKB-UniRule"/>
</dbReference>
<dbReference type="GO" id="GO:0003746">
    <property type="term" value="F:translation elongation factor activity"/>
    <property type="evidence" value="ECO:0007669"/>
    <property type="project" value="UniProtKB-UniRule"/>
</dbReference>
<dbReference type="GO" id="GO:0070125">
    <property type="term" value="P:mitochondrial translational elongation"/>
    <property type="evidence" value="ECO:0007669"/>
    <property type="project" value="UniProtKB-UniRule"/>
</dbReference>
<dbReference type="CDD" id="cd01886">
    <property type="entry name" value="EF-G"/>
    <property type="match status" value="1"/>
</dbReference>
<dbReference type="CDD" id="cd16262">
    <property type="entry name" value="EFG_III"/>
    <property type="match status" value="1"/>
</dbReference>
<dbReference type="CDD" id="cd01434">
    <property type="entry name" value="EFG_mtEFG1_IV"/>
    <property type="match status" value="1"/>
</dbReference>
<dbReference type="CDD" id="cd04097">
    <property type="entry name" value="mtEFG1_C"/>
    <property type="match status" value="1"/>
</dbReference>
<dbReference type="CDD" id="cd04091">
    <property type="entry name" value="mtEFG1_II_like"/>
    <property type="match status" value="1"/>
</dbReference>
<dbReference type="FunFam" id="3.30.70.870:FF:000001">
    <property type="entry name" value="Elongation factor G"/>
    <property type="match status" value="1"/>
</dbReference>
<dbReference type="FunFam" id="2.40.30.10:FF:000022">
    <property type="entry name" value="Elongation factor G, mitochondrial"/>
    <property type="match status" value="1"/>
</dbReference>
<dbReference type="FunFam" id="3.30.70.240:FF:000015">
    <property type="entry name" value="Elongation factor G, mitochondrial"/>
    <property type="match status" value="1"/>
</dbReference>
<dbReference type="FunFam" id="3.40.50.300:FF:000558">
    <property type="entry name" value="Elongation factor G, mitochondrial"/>
    <property type="match status" value="1"/>
</dbReference>
<dbReference type="Gene3D" id="3.30.230.10">
    <property type="match status" value="1"/>
</dbReference>
<dbReference type="Gene3D" id="3.30.70.240">
    <property type="match status" value="1"/>
</dbReference>
<dbReference type="Gene3D" id="3.30.70.870">
    <property type="entry name" value="Elongation Factor G (Translational Gtpase), domain 3"/>
    <property type="match status" value="1"/>
</dbReference>
<dbReference type="Gene3D" id="3.40.50.300">
    <property type="entry name" value="P-loop containing nucleotide triphosphate hydrolases"/>
    <property type="match status" value="1"/>
</dbReference>
<dbReference type="Gene3D" id="2.40.30.10">
    <property type="entry name" value="Translation factors"/>
    <property type="match status" value="1"/>
</dbReference>
<dbReference type="HAMAP" id="MF_00054_B">
    <property type="entry name" value="EF_G_EF_2_B"/>
    <property type="match status" value="1"/>
</dbReference>
<dbReference type="InterPro" id="IPR041095">
    <property type="entry name" value="EFG_II"/>
</dbReference>
<dbReference type="InterPro" id="IPR009022">
    <property type="entry name" value="EFG_III"/>
</dbReference>
<dbReference type="InterPro" id="IPR035647">
    <property type="entry name" value="EFG_III/V"/>
</dbReference>
<dbReference type="InterPro" id="IPR047872">
    <property type="entry name" value="EFG_IV"/>
</dbReference>
<dbReference type="InterPro" id="IPR035649">
    <property type="entry name" value="EFG_V"/>
</dbReference>
<dbReference type="InterPro" id="IPR000640">
    <property type="entry name" value="EFG_V-like"/>
</dbReference>
<dbReference type="InterPro" id="IPR004161">
    <property type="entry name" value="EFTu-like_2"/>
</dbReference>
<dbReference type="InterPro" id="IPR031157">
    <property type="entry name" value="G_TR_CS"/>
</dbReference>
<dbReference type="InterPro" id="IPR027417">
    <property type="entry name" value="P-loop_NTPase"/>
</dbReference>
<dbReference type="InterPro" id="IPR020568">
    <property type="entry name" value="Ribosomal_Su5_D2-typ_SF"/>
</dbReference>
<dbReference type="InterPro" id="IPR014721">
    <property type="entry name" value="Ribsml_uS5_D2-typ_fold_subgr"/>
</dbReference>
<dbReference type="InterPro" id="IPR005225">
    <property type="entry name" value="Small_GTP-bd"/>
</dbReference>
<dbReference type="InterPro" id="IPR000795">
    <property type="entry name" value="T_Tr_GTP-bd_dom"/>
</dbReference>
<dbReference type="InterPro" id="IPR009000">
    <property type="entry name" value="Transl_B-barrel_sf"/>
</dbReference>
<dbReference type="InterPro" id="IPR004540">
    <property type="entry name" value="Transl_elong_EFG/EF2"/>
</dbReference>
<dbReference type="InterPro" id="IPR005517">
    <property type="entry name" value="Transl_elong_EFG/EF2_IV"/>
</dbReference>
<dbReference type="NCBIfam" id="TIGR00484">
    <property type="entry name" value="EF-G"/>
    <property type="match status" value="1"/>
</dbReference>
<dbReference type="NCBIfam" id="NF009381">
    <property type="entry name" value="PRK12740.1-5"/>
    <property type="match status" value="1"/>
</dbReference>
<dbReference type="NCBIfam" id="TIGR00231">
    <property type="entry name" value="small_GTP"/>
    <property type="match status" value="1"/>
</dbReference>
<dbReference type="PANTHER" id="PTHR43636">
    <property type="entry name" value="ELONGATION FACTOR G, MITOCHONDRIAL"/>
    <property type="match status" value="1"/>
</dbReference>
<dbReference type="PANTHER" id="PTHR43636:SF2">
    <property type="entry name" value="ELONGATION FACTOR G, MITOCHONDRIAL"/>
    <property type="match status" value="1"/>
</dbReference>
<dbReference type="Pfam" id="PF00679">
    <property type="entry name" value="EFG_C"/>
    <property type="match status" value="1"/>
</dbReference>
<dbReference type="Pfam" id="PF14492">
    <property type="entry name" value="EFG_III"/>
    <property type="match status" value="1"/>
</dbReference>
<dbReference type="Pfam" id="PF03764">
    <property type="entry name" value="EFG_IV"/>
    <property type="match status" value="1"/>
</dbReference>
<dbReference type="Pfam" id="PF00009">
    <property type="entry name" value="GTP_EFTU"/>
    <property type="match status" value="1"/>
</dbReference>
<dbReference type="Pfam" id="PF03144">
    <property type="entry name" value="GTP_EFTU_D2"/>
    <property type="match status" value="1"/>
</dbReference>
<dbReference type="PRINTS" id="PR00315">
    <property type="entry name" value="ELONGATNFCT"/>
</dbReference>
<dbReference type="SMART" id="SM00838">
    <property type="entry name" value="EFG_C"/>
    <property type="match status" value="1"/>
</dbReference>
<dbReference type="SMART" id="SM00889">
    <property type="entry name" value="EFG_IV"/>
    <property type="match status" value="1"/>
</dbReference>
<dbReference type="SUPFAM" id="SSF54980">
    <property type="entry name" value="EF-G C-terminal domain-like"/>
    <property type="match status" value="2"/>
</dbReference>
<dbReference type="SUPFAM" id="SSF52540">
    <property type="entry name" value="P-loop containing nucleoside triphosphate hydrolases"/>
    <property type="match status" value="1"/>
</dbReference>
<dbReference type="SUPFAM" id="SSF54211">
    <property type="entry name" value="Ribosomal protein S5 domain 2-like"/>
    <property type="match status" value="1"/>
</dbReference>
<dbReference type="SUPFAM" id="SSF50447">
    <property type="entry name" value="Translation proteins"/>
    <property type="match status" value="1"/>
</dbReference>
<dbReference type="PROSITE" id="PS00301">
    <property type="entry name" value="G_TR_1"/>
    <property type="match status" value="1"/>
</dbReference>
<dbReference type="PROSITE" id="PS51722">
    <property type="entry name" value="G_TR_2"/>
    <property type="match status" value="1"/>
</dbReference>
<gene>
    <name evidence="1" type="primary">MEF1</name>
    <name type="ORF">CHGG_01354</name>
</gene>
<accession>Q2HEK0</accession>
<name>EFGM_CHAGB</name>
<protein>
    <recommendedName>
        <fullName evidence="1">Elongation factor G, mitochondrial</fullName>
        <shortName evidence="1">EF-Gmt</shortName>
    </recommendedName>
    <alternativeName>
        <fullName evidence="1">Elongation factor G 1, mitochondrial</fullName>
        <shortName evidence="1">mEF-G 1</shortName>
    </alternativeName>
    <alternativeName>
        <fullName evidence="1">Elongation factor G1</fullName>
    </alternativeName>
</protein>
<comment type="function">
    <text evidence="1">Mitochondrial GTPase that catalyzes the GTP-dependent ribosomal translocation step during translation elongation. During this step, the ribosome changes from the pre-translocational (PRE) to the post-translocational (POST) state as the newly formed A-site-bound peptidyl-tRNA and P-site-bound deacylated tRNA move to the P and E sites, respectively. Catalyzes the coordinated movement of the two tRNA molecules, the mRNA and conformational changes in the ribosome.</text>
</comment>
<comment type="pathway">
    <text evidence="1">Protein biosynthesis; polypeptide chain elongation.</text>
</comment>
<comment type="subcellular location">
    <subcellularLocation>
        <location evidence="1">Mitochondrion</location>
    </subcellularLocation>
</comment>
<comment type="similarity">
    <text evidence="2">Belongs to the TRAFAC class translation factor GTPase superfamily. Classic translation factor GTPase family. EF-G/EF-2 subfamily.</text>
</comment>
<proteinExistence type="inferred from homology"/>